<proteinExistence type="evidence at transcript level"/>
<gene>
    <name evidence="1" type="primary">rnf152-a</name>
    <name evidence="1" type="synonym">rnf152</name>
</gene>
<feature type="chain" id="PRO_0000405838" description="E3 ubiquitin-protein ligase rnf152-A">
    <location>
        <begin position="1"/>
        <end position="203"/>
    </location>
</feature>
<feature type="transmembrane region" description="Helical" evidence="2">
    <location>
        <begin position="167"/>
        <end position="187"/>
    </location>
</feature>
<feature type="zinc finger region" description="RING-type; degenerate" evidence="3">
    <location>
        <begin position="12"/>
        <end position="55"/>
    </location>
</feature>
<reference key="1">
    <citation type="submission" date="2004-06" db="EMBL/GenBank/DDBJ databases">
        <authorList>
            <consortium name="NIH - Xenopus Gene Collection (XGC) project"/>
        </authorList>
    </citation>
    <scope>NUCLEOTIDE SEQUENCE [LARGE SCALE MRNA]</scope>
    <source>
        <tissue>Spleen</tissue>
    </source>
</reference>
<organism>
    <name type="scientific">Xenopus laevis</name>
    <name type="common">African clawed frog</name>
    <dbReference type="NCBI Taxonomy" id="8355"/>
    <lineage>
        <taxon>Eukaryota</taxon>
        <taxon>Metazoa</taxon>
        <taxon>Chordata</taxon>
        <taxon>Craniata</taxon>
        <taxon>Vertebrata</taxon>
        <taxon>Euteleostomi</taxon>
        <taxon>Amphibia</taxon>
        <taxon>Batrachia</taxon>
        <taxon>Anura</taxon>
        <taxon>Pipoidea</taxon>
        <taxon>Pipidae</taxon>
        <taxon>Xenopodinae</taxon>
        <taxon>Xenopus</taxon>
        <taxon>Xenopus</taxon>
    </lineage>
</organism>
<evidence type="ECO:0000250" key="1">
    <source>
        <dbReference type="UniProtKB" id="Q8N8N0"/>
    </source>
</evidence>
<evidence type="ECO:0000255" key="2"/>
<evidence type="ECO:0000255" key="3">
    <source>
        <dbReference type="PROSITE-ProRule" id="PRU00175"/>
    </source>
</evidence>
<evidence type="ECO:0000305" key="4"/>
<keyword id="KW-0458">Lysosome</keyword>
<keyword id="KW-0472">Membrane</keyword>
<keyword id="KW-0479">Metal-binding</keyword>
<keyword id="KW-1185">Reference proteome</keyword>
<keyword id="KW-0808">Transferase</keyword>
<keyword id="KW-0812">Transmembrane</keyword>
<keyword id="KW-1133">Transmembrane helix</keyword>
<keyword id="KW-0833">Ubl conjugation pathway</keyword>
<keyword id="KW-0862">Zinc</keyword>
<keyword id="KW-0863">Zinc-finger</keyword>
<name>R152A_XENLA</name>
<comment type="function">
    <text evidence="1">E3 ubiquitin-protein ligase that acts as a negative regulator of mTORC1 signaling by mediating ubiquitination of RagA/RRAGA and RHEB. Catalyzes 'Lys-63'-linked polyubiquitination of RagA/RRAGA in response to amino acid starvation, thereby regulating mTORC1 signaling. Also mediates monoubiquitination of RHEB, promoting its association with the TSC-TBC complex and subsequent inhibition. Also mediates 'Lys-48'-linked polyubiquitination of target proteins and their subsequent targeting to the proteasome for degradation.</text>
</comment>
<comment type="catalytic activity">
    <reaction evidence="1">
        <text>S-ubiquitinyl-[E2 ubiquitin-conjugating enzyme]-L-cysteine + [acceptor protein]-L-lysine = [E2 ubiquitin-conjugating enzyme]-L-cysteine + N(6)-ubiquitinyl-[acceptor protein]-L-lysine.</text>
        <dbReference type="EC" id="2.3.2.27"/>
    </reaction>
</comment>
<comment type="pathway">
    <text evidence="1">Protein modification; protein ubiquitination.</text>
</comment>
<comment type="subcellular location">
    <subcellularLocation>
        <location evidence="1">Lysosome membrane</location>
        <topology evidence="1">Single-pass membrane protein</topology>
    </subcellularLocation>
</comment>
<comment type="similarity">
    <text evidence="4">Belongs to the RNF152 family.</text>
</comment>
<sequence length="203" mass="22671">METLSQDSLLECQICFNYYSPRRRPKLLDCKRTCCSVCLQQMRACQKDLRCPWCRGVTKLPPGYSVSQLPDDPDVVAVITIPHASENTPVFIKLPSNGCYMWPLPVSKERALLPGDIGCRLLPGNQQKPVTVVTMPMEQQPLHGNIPQDIVEEEHERRGVVKSSTWSGICTVILVACVLVFLLGIVLHNMSCISKRFTVISCG</sequence>
<accession>Q6GND7</accession>
<protein>
    <recommendedName>
        <fullName evidence="4">E3 ubiquitin-protein ligase rnf152-A</fullName>
        <ecNumber evidence="1">2.3.2.27</ecNumber>
    </recommendedName>
    <alternativeName>
        <fullName evidence="1">RING finger protein 152-A</fullName>
    </alternativeName>
    <alternativeName>
        <fullName evidence="4">RING-type E3 ubiquitin transferase rnf152-A</fullName>
    </alternativeName>
</protein>
<dbReference type="EC" id="2.3.2.27" evidence="1"/>
<dbReference type="EMBL" id="BC073577">
    <property type="protein sequence ID" value="AAH73577.1"/>
    <property type="molecule type" value="mRNA"/>
</dbReference>
<dbReference type="RefSeq" id="NP_001085944.1">
    <property type="nucleotide sequence ID" value="NM_001092475.1"/>
</dbReference>
<dbReference type="SMR" id="Q6GND7"/>
<dbReference type="DNASU" id="444373"/>
<dbReference type="GeneID" id="444373"/>
<dbReference type="KEGG" id="xla:444373"/>
<dbReference type="AGR" id="Xenbase:XB-GENE-1001848"/>
<dbReference type="CTD" id="444373"/>
<dbReference type="Xenbase" id="XB-GENE-1001848">
    <property type="gene designation" value="rnf152.S"/>
</dbReference>
<dbReference type="OrthoDB" id="6106880at2759"/>
<dbReference type="UniPathway" id="UPA00143"/>
<dbReference type="Proteomes" id="UP000186698">
    <property type="component" value="Chromosome 6S"/>
</dbReference>
<dbReference type="Bgee" id="444373">
    <property type="expression patterns" value="Expressed in spleen and 14 other cell types or tissues"/>
</dbReference>
<dbReference type="GO" id="GO:0005765">
    <property type="term" value="C:lysosomal membrane"/>
    <property type="evidence" value="ECO:0000250"/>
    <property type="project" value="UniProtKB"/>
</dbReference>
<dbReference type="GO" id="GO:0005764">
    <property type="term" value="C:lysosome"/>
    <property type="evidence" value="ECO:0000250"/>
    <property type="project" value="UniProtKB"/>
</dbReference>
<dbReference type="GO" id="GO:0031090">
    <property type="term" value="C:organelle membrane"/>
    <property type="evidence" value="ECO:0000250"/>
    <property type="project" value="UniProtKB"/>
</dbReference>
<dbReference type="GO" id="GO:0061630">
    <property type="term" value="F:ubiquitin protein ligase activity"/>
    <property type="evidence" value="ECO:0007669"/>
    <property type="project" value="InterPro"/>
</dbReference>
<dbReference type="GO" id="GO:0004842">
    <property type="term" value="F:ubiquitin-protein transferase activity"/>
    <property type="evidence" value="ECO:0000250"/>
    <property type="project" value="UniProtKB"/>
</dbReference>
<dbReference type="GO" id="GO:0008270">
    <property type="term" value="F:zinc ion binding"/>
    <property type="evidence" value="ECO:0007669"/>
    <property type="project" value="UniProtKB-KW"/>
</dbReference>
<dbReference type="GO" id="GO:0034198">
    <property type="term" value="P:cellular response to amino acid starvation"/>
    <property type="evidence" value="ECO:0000250"/>
    <property type="project" value="UniProtKB"/>
</dbReference>
<dbReference type="GO" id="GO:1904262">
    <property type="term" value="P:negative regulation of TORC1 signaling"/>
    <property type="evidence" value="ECO:0000250"/>
    <property type="project" value="UniProtKB"/>
</dbReference>
<dbReference type="GO" id="GO:0010508">
    <property type="term" value="P:positive regulation of autophagy"/>
    <property type="evidence" value="ECO:0000250"/>
    <property type="project" value="UniProtKB"/>
</dbReference>
<dbReference type="GO" id="GO:0070936">
    <property type="term" value="P:protein K48-linked ubiquitination"/>
    <property type="evidence" value="ECO:0000250"/>
    <property type="project" value="UniProtKB"/>
</dbReference>
<dbReference type="GO" id="GO:0070534">
    <property type="term" value="P:protein K63-linked ubiquitination"/>
    <property type="evidence" value="ECO:0000250"/>
    <property type="project" value="UniProtKB"/>
</dbReference>
<dbReference type="GO" id="GO:0006513">
    <property type="term" value="P:protein monoubiquitination"/>
    <property type="evidence" value="ECO:0000250"/>
    <property type="project" value="UniProtKB"/>
</dbReference>
<dbReference type="FunFam" id="3.30.40.10:FF:000197">
    <property type="entry name" value="E3 ubiquitin-protein ligase RNF152"/>
    <property type="match status" value="1"/>
</dbReference>
<dbReference type="Gene3D" id="3.30.40.10">
    <property type="entry name" value="Zinc/RING finger domain, C3HC4 (zinc finger)"/>
    <property type="match status" value="1"/>
</dbReference>
<dbReference type="InterPro" id="IPR045744">
    <property type="entry name" value="RNF152_C"/>
</dbReference>
<dbReference type="InterPro" id="IPR001841">
    <property type="entry name" value="Znf_RING"/>
</dbReference>
<dbReference type="InterPro" id="IPR013083">
    <property type="entry name" value="Znf_RING/FYVE/PHD"/>
</dbReference>
<dbReference type="PANTHER" id="PTHR25464:SF1">
    <property type="entry name" value="E3 UBIQUITIN-PROTEIN LIGASE RNF152"/>
    <property type="match status" value="1"/>
</dbReference>
<dbReference type="PANTHER" id="PTHR25464">
    <property type="entry name" value="TRIPARTITE MOTIF-CONTAINING PROTEIN 2-LIKE PROTEIN"/>
    <property type="match status" value="1"/>
</dbReference>
<dbReference type="Pfam" id="PF19325">
    <property type="entry name" value="RNF152_C"/>
    <property type="match status" value="1"/>
</dbReference>
<dbReference type="SUPFAM" id="SSF57850">
    <property type="entry name" value="RING/U-box"/>
    <property type="match status" value="1"/>
</dbReference>
<dbReference type="PROSITE" id="PS50089">
    <property type="entry name" value="ZF_RING_2"/>
    <property type="match status" value="1"/>
</dbReference>